<evidence type="ECO:0000255" key="1">
    <source>
        <dbReference type="HAMAP-Rule" id="MF_01316"/>
    </source>
</evidence>
<evidence type="ECO:0000269" key="2">
    <source>
    </source>
</evidence>
<evidence type="ECO:0000269" key="3">
    <source>
    </source>
</evidence>
<evidence type="ECO:0000269" key="4">
    <source>
    </source>
</evidence>
<evidence type="ECO:0000269" key="5">
    <source>
    </source>
</evidence>
<evidence type="ECO:0000305" key="6">
    <source>
    </source>
</evidence>
<evidence type="ECO:0000312" key="7">
    <source>
        <dbReference type="PDB" id="7N8O"/>
    </source>
</evidence>
<evidence type="ECO:0007744" key="8">
    <source>
        <dbReference type="PDB" id="7N8O"/>
    </source>
</evidence>
<evidence type="ECO:0007744" key="9">
    <source>
        <dbReference type="PDB" id="7RCV"/>
    </source>
</evidence>
<evidence type="ECO:0007829" key="10">
    <source>
        <dbReference type="PDB" id="7N8O"/>
    </source>
</evidence>
<keyword id="KW-0002">3D-structure</keyword>
<keyword id="KW-0903">Direct protein sequencing</keyword>
<keyword id="KW-0291">Formylation</keyword>
<keyword id="KW-0472">Membrane</keyword>
<keyword id="KW-0602">Photosynthesis</keyword>
<keyword id="KW-0604">Photosystem II</keyword>
<keyword id="KW-0674">Reaction center</keyword>
<keyword id="KW-1185">Reference proteome</keyword>
<keyword id="KW-0793">Thylakoid</keyword>
<keyword id="KW-0812">Transmembrane</keyword>
<keyword id="KW-1133">Transmembrane helix</keyword>
<name>PSBI_SYNY3</name>
<reference key="1">
    <citation type="journal article" date="1995" name="Mol. Gen. Genet.">
        <title>Directed inactivation of the psbI gene does not affect photosystem II in the cyanobacterium Synechocystis sp. PCC 6803.</title>
        <authorList>
            <person name="Ikeuchi M."/>
            <person name="Shukla V.K."/>
            <person name="Pakrasi H.B."/>
            <person name="Inoue Y."/>
        </authorList>
    </citation>
    <scope>NUCLEOTIDE SEQUENCE [GENOMIC DNA]</scope>
    <scope>DISRUPTION PHENOTYPE</scope>
    <scope>FUNCTION</scope>
</reference>
<reference key="2">
    <citation type="journal article" date="1995" name="DNA Res.">
        <title>Sequence analysis of the genome of the unicellular cyanobacterium Synechocystis sp. strain PCC6803. I. Sequence features in the 1 Mb region from map positions 64% to 92% of the genome.</title>
        <authorList>
            <person name="Kaneko T."/>
            <person name="Tanaka A."/>
            <person name="Sato S."/>
            <person name="Kotani H."/>
            <person name="Sazuka T."/>
            <person name="Miyajima N."/>
            <person name="Sugiura M."/>
            <person name="Tabata S."/>
        </authorList>
    </citation>
    <scope>NUCLEOTIDE SEQUENCE [LARGE SCALE GENOMIC DNA]</scope>
    <source>
        <strain>ATCC 27184 / PCC 6803 / N-1</strain>
    </source>
</reference>
<reference key="3">
    <citation type="journal article" date="1996" name="DNA Res.">
        <title>Sequence analysis of the genome of the unicellular cyanobacterium Synechocystis sp. strain PCC6803. II. Sequence determination of the entire genome and assignment of potential protein-coding regions.</title>
        <authorList>
            <person name="Kaneko T."/>
            <person name="Sato S."/>
            <person name="Kotani H."/>
            <person name="Tanaka A."/>
            <person name="Asamizu E."/>
            <person name="Nakamura Y."/>
            <person name="Miyajima N."/>
            <person name="Hirosawa M."/>
            <person name="Sugiura M."/>
            <person name="Sasamoto S."/>
            <person name="Kimura T."/>
            <person name="Hosouchi T."/>
            <person name="Matsuno A."/>
            <person name="Muraki A."/>
            <person name="Nakazaki N."/>
            <person name="Naruo K."/>
            <person name="Okumura S."/>
            <person name="Shimpo S."/>
            <person name="Takeuchi C."/>
            <person name="Wada T."/>
            <person name="Watanabe A."/>
            <person name="Yamada M."/>
            <person name="Yasuda M."/>
            <person name="Tabata S."/>
        </authorList>
    </citation>
    <scope>NUCLEOTIDE SEQUENCE [LARGE SCALE GENOMIC DNA]</scope>
    <source>
        <strain>ATCC 27184 / PCC 6803 / Kazusa</strain>
    </source>
</reference>
<reference key="4">
    <citation type="journal article" date="2002" name="Biochemistry">
        <title>Proteomic analysis of a highly active photosystem II preparation from the cyanobacterium Synechocystis sp. PCC 6803 reveals the presence of novel polypeptides.</title>
        <authorList>
            <person name="Kashino Y."/>
            <person name="Lauber W.M."/>
            <person name="Carroll J.A."/>
            <person name="Wang Q."/>
            <person name="Whitmarsh J."/>
            <person name="Satoh K."/>
            <person name="Pakrasi H.B."/>
        </authorList>
    </citation>
    <scope>PROTEIN SEQUENCE OF 1-8</scope>
    <scope>SUBUNIT</scope>
    <scope>SUBCELLULAR LOCATION</scope>
    <source>
        <strain>ATCC 27184 / PCC 6803 / Kazusa</strain>
    </source>
</reference>
<reference key="5">
    <citation type="journal article" date="2007" name="Plant Physiol.">
        <title>Role of the PsbI protein in photosystem II assembly and repair in the cyanobacterium Synechocystis sp. PCC 6803.</title>
        <authorList>
            <person name="Dobakova M."/>
            <person name="Tichy M."/>
            <person name="Komenda J."/>
        </authorList>
    </citation>
    <scope>FUNCTION</scope>
    <scope>SUBUNIT</scope>
    <scope>SUBCELLULAR LOCATION</scope>
    <scope>DISRUPTION PHENOTYPE</scope>
    <source>
        <strain>PCC 6803-G</strain>
    </source>
</reference>
<reference evidence="8 9" key="6">
    <citation type="journal article" date="2022" name="Proc. Natl. Acad. Sci. U.S.A.">
        <title>High-resolution cryo-electron microscopy structure of photosystem II from the mesophilic cyanobacterium, Synechocystis sp. PCC 6803.</title>
        <authorList>
            <person name="Gisriel C.J."/>
            <person name="Wang J."/>
            <person name="Liu J."/>
            <person name="Flesher D.A."/>
            <person name="Reiss K.M."/>
            <person name="Huang H.L."/>
            <person name="Yang K.R."/>
            <person name="Armstrong W.H."/>
            <person name="Gunner M.R."/>
            <person name="Batista V.S."/>
            <person name="Debus R.J."/>
            <person name="Brudvig G.W."/>
        </authorList>
    </citation>
    <scope>STRUCTURE BY ELECTRON MICROSCOPY (1.93 ANGSTROMS) OF 1-36</scope>
    <scope>FUNCTION</scope>
    <scope>SUBUNIT</scope>
    <scope>SUBCELLULAR LOCATION</scope>
    <scope>FORMYLATION AT MET-1</scope>
    <source>
        <strain>ATCC 27184 / PCC 6803 / Kazusa</strain>
    </source>
</reference>
<organism>
    <name type="scientific">Synechocystis sp. (strain ATCC 27184 / PCC 6803 / Kazusa)</name>
    <dbReference type="NCBI Taxonomy" id="1111708"/>
    <lineage>
        <taxon>Bacteria</taxon>
        <taxon>Bacillati</taxon>
        <taxon>Cyanobacteriota</taxon>
        <taxon>Cyanophyceae</taxon>
        <taxon>Synechococcales</taxon>
        <taxon>Merismopediaceae</taxon>
        <taxon>Synechocystis</taxon>
    </lineage>
</organism>
<gene>
    <name evidence="1" type="primary">psbI</name>
    <name type="ordered locus">sml0001</name>
</gene>
<feature type="chain" id="PRO_0000219663" description="Photosystem II reaction center protein I">
    <location>
        <begin position="1"/>
        <end position="38"/>
    </location>
</feature>
<feature type="transmembrane region" description="Helical" evidence="4 7">
    <location>
        <begin position="3"/>
        <end position="25"/>
    </location>
</feature>
<feature type="modified residue" description="N-formylmethionine" evidence="3 7">
    <location>
        <position position="1"/>
    </location>
</feature>
<feature type="helix" evidence="10">
    <location>
        <begin position="2"/>
        <end position="24"/>
    </location>
</feature>
<feature type="helix" evidence="10">
    <location>
        <begin position="27"/>
        <end position="29"/>
    </location>
</feature>
<feature type="strand" evidence="10">
    <location>
        <begin position="30"/>
        <end position="33"/>
    </location>
</feature>
<proteinExistence type="evidence at protein level"/>
<accession>Q54697</accession>
<dbReference type="EMBL" id="U28040">
    <property type="protein sequence ID" value="AAC43720.1"/>
    <property type="molecule type" value="Genomic_DNA"/>
</dbReference>
<dbReference type="EMBL" id="BA000022">
    <property type="protein sequence ID" value="BAA10085.1"/>
    <property type="molecule type" value="Genomic_DNA"/>
</dbReference>
<dbReference type="PIR" id="S76107">
    <property type="entry name" value="S76107"/>
</dbReference>
<dbReference type="PDB" id="6WJ6">
    <property type="method" value="EM"/>
    <property type="resolution" value="2.58 A"/>
    <property type="chains" value="I=1-38"/>
</dbReference>
<dbReference type="PDB" id="7N8O">
    <property type="method" value="EM"/>
    <property type="resolution" value="1.93 A"/>
    <property type="chains" value="I/i=1-36"/>
</dbReference>
<dbReference type="PDB" id="7RCV">
    <property type="method" value="EM"/>
    <property type="resolution" value="2.01 A"/>
    <property type="chains" value="I/i=1-36"/>
</dbReference>
<dbReference type="PDB" id="8AM5">
    <property type="method" value="EM"/>
    <property type="resolution" value="3.10 A"/>
    <property type="chains" value="I=1-38"/>
</dbReference>
<dbReference type="PDB" id="8ASL">
    <property type="method" value="EM"/>
    <property type="resolution" value="3.15 A"/>
    <property type="chains" value="I=1-38"/>
</dbReference>
<dbReference type="PDB" id="8TOW">
    <property type="method" value="EM"/>
    <property type="resolution" value="2.14 A"/>
    <property type="chains" value="I/i=1-38"/>
</dbReference>
<dbReference type="PDB" id="9EH5">
    <property type="method" value="EM"/>
    <property type="resolution" value="1.97 A"/>
    <property type="chains" value="I/i=1-38"/>
</dbReference>
<dbReference type="PDBsum" id="6WJ6"/>
<dbReference type="PDBsum" id="7N8O"/>
<dbReference type="PDBsum" id="7RCV"/>
<dbReference type="PDBsum" id="8AM5"/>
<dbReference type="PDBsum" id="8ASL"/>
<dbReference type="PDBsum" id="8TOW"/>
<dbReference type="PDBsum" id="9EH5"/>
<dbReference type="EMDB" id="EMD-15522"/>
<dbReference type="EMDB" id="EMD-15618"/>
<dbReference type="EMDB" id="EMD-21690"/>
<dbReference type="EMDB" id="EMD-24239"/>
<dbReference type="EMDB" id="EMD-24407"/>
<dbReference type="EMDB" id="EMD-41460"/>
<dbReference type="EMDB" id="EMD-48046"/>
<dbReference type="SMR" id="Q54697"/>
<dbReference type="IntAct" id="Q54697">
    <property type="interactions" value="1"/>
</dbReference>
<dbReference type="STRING" id="1148.gene:10499577"/>
<dbReference type="PaxDb" id="1148-1673335"/>
<dbReference type="EnsemblBacteria" id="BAA10085">
    <property type="protein sequence ID" value="BAA10085"/>
    <property type="gene ID" value="BAA10085"/>
</dbReference>
<dbReference type="KEGG" id="syn:sml0001"/>
<dbReference type="eggNOG" id="ENOG5033CII">
    <property type="taxonomic scope" value="Bacteria"/>
</dbReference>
<dbReference type="InParanoid" id="Q54697"/>
<dbReference type="BioCyc" id="MetaCyc:PSBI-MONOMER"/>
<dbReference type="Proteomes" id="UP000001425">
    <property type="component" value="Chromosome"/>
</dbReference>
<dbReference type="GO" id="GO:0009539">
    <property type="term" value="C:photosystem II reaction center"/>
    <property type="evidence" value="ECO:0007669"/>
    <property type="project" value="InterPro"/>
</dbReference>
<dbReference type="GO" id="GO:0031676">
    <property type="term" value="C:plasma membrane-derived thylakoid membrane"/>
    <property type="evidence" value="ECO:0007669"/>
    <property type="project" value="UniProtKB-SubCell"/>
</dbReference>
<dbReference type="GO" id="GO:0030096">
    <property type="term" value="C:plasma membrane-derived thylakoid photosystem II"/>
    <property type="evidence" value="ECO:0000314"/>
    <property type="project" value="UniProtKB"/>
</dbReference>
<dbReference type="GO" id="GO:0015979">
    <property type="term" value="P:photosynthesis"/>
    <property type="evidence" value="ECO:0007669"/>
    <property type="project" value="UniProtKB-UniRule"/>
</dbReference>
<dbReference type="HAMAP" id="MF_01316">
    <property type="entry name" value="PSII_PsbI"/>
    <property type="match status" value="1"/>
</dbReference>
<dbReference type="InterPro" id="IPR003686">
    <property type="entry name" value="PSII_PsbI"/>
</dbReference>
<dbReference type="InterPro" id="IPR037271">
    <property type="entry name" value="PSII_PsbI_sf"/>
</dbReference>
<dbReference type="NCBIfam" id="NF002735">
    <property type="entry name" value="PRK02655.1"/>
    <property type="match status" value="1"/>
</dbReference>
<dbReference type="PANTHER" id="PTHR35772">
    <property type="entry name" value="PHOTOSYSTEM II REACTION CENTER PROTEIN I"/>
    <property type="match status" value="1"/>
</dbReference>
<dbReference type="PANTHER" id="PTHR35772:SF1">
    <property type="entry name" value="PHOTOSYSTEM II REACTION CENTER PROTEIN I"/>
    <property type="match status" value="1"/>
</dbReference>
<dbReference type="Pfam" id="PF02532">
    <property type="entry name" value="PsbI"/>
    <property type="match status" value="1"/>
</dbReference>
<dbReference type="SUPFAM" id="SSF161041">
    <property type="entry name" value="Photosystem II reaction center protein I, PsbI"/>
    <property type="match status" value="1"/>
</dbReference>
<sequence length="38" mass="4306">MLTLKIAVYIVVGLFISLFIFGFLSSDPTRNPGRKDFE</sequence>
<protein>
    <recommendedName>
        <fullName evidence="1">Photosystem II reaction center protein I</fullName>
        <shortName evidence="1">PSII-I</shortName>
    </recommendedName>
    <alternativeName>
        <fullName evidence="1">PSII 4.4 kDa protein</fullName>
    </alternativeName>
</protein>
<comment type="function">
    <text evidence="1 3 4 5">One of the components of the core complex of photosystem II (PSII) (PubMed:8544827). Not essential for assembly, it probably binds to D1 early in the assembly of PSII and stabilizes binding of CP43 (psbC) to the reaction center (PubMed:17921338). PSII is a light-driven water:plastoquinone oxidoreductase that uses light energy to abstract electrons from H(2)O, generating O(2) and a proton gradient subsequently used for ATP formation. It consists of a core antenna complex that captures photons, and an electron transfer chain that converts photonic excitation into a charge separation.</text>
</comment>
<comment type="subunit">
    <text evidence="1 2 3 4">PSII is composed of 1 copy each of membrane proteins PsbA, PsbB, PsbC, PsbD, PsbE, PsbF, PsbH, PsbI, PsbJ, PsbK, PsbL, PsbM, PsbT, PsbX, PsbY, PsbZ, Psb30/Ycf12, peripheral proteins PsbO, CyanoQ (PsbQ), PsbU, PsbV and a large number of cofactors. It forms dimeric complexes.</text>
</comment>
<comment type="subcellular location">
    <subcellularLocation>
        <location evidence="1 2 3 4">Cellular thylakoid membrane</location>
        <topology evidence="1 4 6">Single-pass membrane protein</topology>
    </subcellularLocation>
</comment>
<comment type="disruption phenotype">
    <text evidence="3 5">Loss of about 25% of PSII activity, cells are slightly more photosensitive (PubMed:17921338, PubMed:8544827). Altered assembly of PSII, with destabilized binding of CP43 (psbC) (PubMed:17921338).</text>
</comment>
<comment type="similarity">
    <text evidence="1">Belongs to the PsbI family.</text>
</comment>